<gene>
    <name evidence="1" type="primary">rplX</name>
    <name type="ordered locus">OTBS_0365</name>
</gene>
<accession>A5CCK1</accession>
<comment type="function">
    <text evidence="1">One of two assembly initiator proteins, it binds directly to the 5'-end of the 23S rRNA, where it nucleates assembly of the 50S subunit.</text>
</comment>
<comment type="function">
    <text evidence="1">One of the proteins that surrounds the polypeptide exit tunnel on the outside of the subunit.</text>
</comment>
<comment type="subunit">
    <text evidence="1">Part of the 50S ribosomal subunit.</text>
</comment>
<comment type="similarity">
    <text evidence="1">Belongs to the universal ribosomal protein uL24 family.</text>
</comment>
<proteinExistence type="inferred from homology"/>
<reference key="1">
    <citation type="journal article" date="2007" name="Proc. Natl. Acad. Sci. U.S.A.">
        <title>The Orientia tsutsugamushi genome reveals massive proliferation of conjugative type IV secretion system and host-cell interaction genes.</title>
        <authorList>
            <person name="Cho N.-H."/>
            <person name="Kim H.-R."/>
            <person name="Lee J.-H."/>
            <person name="Kim S.-Y."/>
            <person name="Kim J."/>
            <person name="Cha S."/>
            <person name="Kim S.-Y."/>
            <person name="Darby A.C."/>
            <person name="Fuxelius H.-H."/>
            <person name="Yin J."/>
            <person name="Kim J.H."/>
            <person name="Kim J."/>
            <person name="Lee S.J."/>
            <person name="Koh Y.-S."/>
            <person name="Jang W.-J."/>
            <person name="Park K.-H."/>
            <person name="Andersson S.G.E."/>
            <person name="Choi M.-S."/>
            <person name="Kim I.-S."/>
        </authorList>
    </citation>
    <scope>NUCLEOTIDE SEQUENCE [LARGE SCALE GENOMIC DNA]</scope>
    <source>
        <strain>Boryong</strain>
    </source>
</reference>
<keyword id="KW-1185">Reference proteome</keyword>
<keyword id="KW-0687">Ribonucleoprotein</keyword>
<keyword id="KW-0689">Ribosomal protein</keyword>
<keyword id="KW-0694">RNA-binding</keyword>
<keyword id="KW-0699">rRNA-binding</keyword>
<dbReference type="EMBL" id="AM494475">
    <property type="protein sequence ID" value="CAM79431.1"/>
    <property type="molecule type" value="Genomic_DNA"/>
</dbReference>
<dbReference type="RefSeq" id="WP_011944429.1">
    <property type="nucleotide sequence ID" value="NC_009488.1"/>
</dbReference>
<dbReference type="SMR" id="A5CCK1"/>
<dbReference type="KEGG" id="ots:OTBS_0365"/>
<dbReference type="eggNOG" id="COG0198">
    <property type="taxonomic scope" value="Bacteria"/>
</dbReference>
<dbReference type="HOGENOM" id="CLU_093315_2_0_5"/>
<dbReference type="Proteomes" id="UP000001565">
    <property type="component" value="Chromosome"/>
</dbReference>
<dbReference type="GO" id="GO:1990904">
    <property type="term" value="C:ribonucleoprotein complex"/>
    <property type="evidence" value="ECO:0007669"/>
    <property type="project" value="UniProtKB-KW"/>
</dbReference>
<dbReference type="GO" id="GO:0005840">
    <property type="term" value="C:ribosome"/>
    <property type="evidence" value="ECO:0007669"/>
    <property type="project" value="UniProtKB-KW"/>
</dbReference>
<dbReference type="GO" id="GO:0019843">
    <property type="term" value="F:rRNA binding"/>
    <property type="evidence" value="ECO:0007669"/>
    <property type="project" value="UniProtKB-UniRule"/>
</dbReference>
<dbReference type="GO" id="GO:0003735">
    <property type="term" value="F:structural constituent of ribosome"/>
    <property type="evidence" value="ECO:0007669"/>
    <property type="project" value="InterPro"/>
</dbReference>
<dbReference type="GO" id="GO:0006412">
    <property type="term" value="P:translation"/>
    <property type="evidence" value="ECO:0007669"/>
    <property type="project" value="UniProtKB-UniRule"/>
</dbReference>
<dbReference type="CDD" id="cd06089">
    <property type="entry name" value="KOW_RPL26"/>
    <property type="match status" value="1"/>
</dbReference>
<dbReference type="Gene3D" id="2.30.30.30">
    <property type="match status" value="1"/>
</dbReference>
<dbReference type="HAMAP" id="MF_01326_B">
    <property type="entry name" value="Ribosomal_uL24_B"/>
    <property type="match status" value="1"/>
</dbReference>
<dbReference type="InterPro" id="IPR005824">
    <property type="entry name" value="KOW"/>
</dbReference>
<dbReference type="InterPro" id="IPR014722">
    <property type="entry name" value="Rib_uL2_dom2"/>
</dbReference>
<dbReference type="InterPro" id="IPR003256">
    <property type="entry name" value="Ribosomal_uL24"/>
</dbReference>
<dbReference type="InterPro" id="IPR005825">
    <property type="entry name" value="Ribosomal_uL24_CS"/>
</dbReference>
<dbReference type="InterPro" id="IPR041988">
    <property type="entry name" value="Ribosomal_uL24_KOW"/>
</dbReference>
<dbReference type="InterPro" id="IPR008991">
    <property type="entry name" value="Translation_prot_SH3-like_sf"/>
</dbReference>
<dbReference type="NCBIfam" id="TIGR01079">
    <property type="entry name" value="rplX_bact"/>
    <property type="match status" value="1"/>
</dbReference>
<dbReference type="PANTHER" id="PTHR12903">
    <property type="entry name" value="MITOCHONDRIAL RIBOSOMAL PROTEIN L24"/>
    <property type="match status" value="1"/>
</dbReference>
<dbReference type="Pfam" id="PF00467">
    <property type="entry name" value="KOW"/>
    <property type="match status" value="1"/>
</dbReference>
<dbReference type="Pfam" id="PF17136">
    <property type="entry name" value="ribosomal_L24"/>
    <property type="match status" value="1"/>
</dbReference>
<dbReference type="SMART" id="SM00739">
    <property type="entry name" value="KOW"/>
    <property type="match status" value="1"/>
</dbReference>
<dbReference type="SUPFAM" id="SSF50104">
    <property type="entry name" value="Translation proteins SH3-like domain"/>
    <property type="match status" value="1"/>
</dbReference>
<dbReference type="PROSITE" id="PS01108">
    <property type="entry name" value="RIBOSOMAL_L24"/>
    <property type="match status" value="1"/>
</dbReference>
<sequence>MVKIRIKTGDKVQVITGKDKGKRGIVIKVLASLSRVIVKGINLARKHVKANKNDVSGGIINKELPIHISNVAYVDSSSNLITKITYTKLDDKRKVRVSKRSGEILQ</sequence>
<name>RL24_ORITB</name>
<feature type="chain" id="PRO_1000052270" description="Large ribosomal subunit protein uL24">
    <location>
        <begin position="1"/>
        <end position="106"/>
    </location>
</feature>
<protein>
    <recommendedName>
        <fullName evidence="1">Large ribosomal subunit protein uL24</fullName>
    </recommendedName>
    <alternativeName>
        <fullName evidence="2">50S ribosomal protein L24</fullName>
    </alternativeName>
</protein>
<organism>
    <name type="scientific">Orientia tsutsugamushi (strain Boryong)</name>
    <name type="common">Rickettsia tsutsugamushi</name>
    <dbReference type="NCBI Taxonomy" id="357244"/>
    <lineage>
        <taxon>Bacteria</taxon>
        <taxon>Pseudomonadati</taxon>
        <taxon>Pseudomonadota</taxon>
        <taxon>Alphaproteobacteria</taxon>
        <taxon>Rickettsiales</taxon>
        <taxon>Rickettsiaceae</taxon>
        <taxon>Rickettsieae</taxon>
        <taxon>Orientia</taxon>
    </lineage>
</organism>
<evidence type="ECO:0000255" key="1">
    <source>
        <dbReference type="HAMAP-Rule" id="MF_01326"/>
    </source>
</evidence>
<evidence type="ECO:0000305" key="2"/>